<name>RRF_METSB</name>
<dbReference type="EMBL" id="CP001280">
    <property type="protein sequence ID" value="ACK52714.1"/>
    <property type="molecule type" value="Genomic_DNA"/>
</dbReference>
<dbReference type="RefSeq" id="WP_012592782.1">
    <property type="nucleotide sequence ID" value="NC_011666.1"/>
</dbReference>
<dbReference type="SMR" id="B8EMN5"/>
<dbReference type="STRING" id="395965.Msil_3832"/>
<dbReference type="KEGG" id="msl:Msil_3832"/>
<dbReference type="eggNOG" id="COG0233">
    <property type="taxonomic scope" value="Bacteria"/>
</dbReference>
<dbReference type="HOGENOM" id="CLU_073981_2_0_5"/>
<dbReference type="OrthoDB" id="9804006at2"/>
<dbReference type="Proteomes" id="UP000002257">
    <property type="component" value="Chromosome"/>
</dbReference>
<dbReference type="GO" id="GO:0005829">
    <property type="term" value="C:cytosol"/>
    <property type="evidence" value="ECO:0007669"/>
    <property type="project" value="GOC"/>
</dbReference>
<dbReference type="GO" id="GO:0043023">
    <property type="term" value="F:ribosomal large subunit binding"/>
    <property type="evidence" value="ECO:0007669"/>
    <property type="project" value="TreeGrafter"/>
</dbReference>
<dbReference type="GO" id="GO:0002184">
    <property type="term" value="P:cytoplasmic translational termination"/>
    <property type="evidence" value="ECO:0007669"/>
    <property type="project" value="TreeGrafter"/>
</dbReference>
<dbReference type="CDD" id="cd00520">
    <property type="entry name" value="RRF"/>
    <property type="match status" value="1"/>
</dbReference>
<dbReference type="FunFam" id="1.10.132.20:FF:000001">
    <property type="entry name" value="Ribosome-recycling factor"/>
    <property type="match status" value="1"/>
</dbReference>
<dbReference type="FunFam" id="3.30.1360.40:FF:000001">
    <property type="entry name" value="Ribosome-recycling factor"/>
    <property type="match status" value="1"/>
</dbReference>
<dbReference type="Gene3D" id="3.30.1360.40">
    <property type="match status" value="1"/>
</dbReference>
<dbReference type="Gene3D" id="1.10.132.20">
    <property type="entry name" value="Ribosome-recycling factor"/>
    <property type="match status" value="1"/>
</dbReference>
<dbReference type="HAMAP" id="MF_00040">
    <property type="entry name" value="RRF"/>
    <property type="match status" value="1"/>
</dbReference>
<dbReference type="InterPro" id="IPR002661">
    <property type="entry name" value="Ribosome_recyc_fac"/>
</dbReference>
<dbReference type="InterPro" id="IPR023584">
    <property type="entry name" value="Ribosome_recyc_fac_dom"/>
</dbReference>
<dbReference type="InterPro" id="IPR036191">
    <property type="entry name" value="RRF_sf"/>
</dbReference>
<dbReference type="NCBIfam" id="TIGR00496">
    <property type="entry name" value="frr"/>
    <property type="match status" value="1"/>
</dbReference>
<dbReference type="PANTHER" id="PTHR20982:SF3">
    <property type="entry name" value="MITOCHONDRIAL RIBOSOME RECYCLING FACTOR PSEUDO 1"/>
    <property type="match status" value="1"/>
</dbReference>
<dbReference type="PANTHER" id="PTHR20982">
    <property type="entry name" value="RIBOSOME RECYCLING FACTOR"/>
    <property type="match status" value="1"/>
</dbReference>
<dbReference type="Pfam" id="PF01765">
    <property type="entry name" value="RRF"/>
    <property type="match status" value="1"/>
</dbReference>
<dbReference type="SUPFAM" id="SSF55194">
    <property type="entry name" value="Ribosome recycling factor, RRF"/>
    <property type="match status" value="1"/>
</dbReference>
<sequence length="186" mass="20775">MSAEFDLADIKRRMQGAIATLKHELGGLRTGRASASLIEPVNVEAYGQTMPLNQVATISVPEPRMLSVQVWDKGMVGAVDKAIRNANLGLSPTVEGQVLRIRIPELNEQRRKEMAKVAHKYAEDARVAIRHVRRDGIDVLKRLLKDKEISEDDEKRHESEVQKATDQCVADVDSALVAKEREIMQV</sequence>
<protein>
    <recommendedName>
        <fullName evidence="1">Ribosome-recycling factor</fullName>
        <shortName evidence="1">RRF</shortName>
    </recommendedName>
    <alternativeName>
        <fullName evidence="1">Ribosome-releasing factor</fullName>
    </alternativeName>
</protein>
<proteinExistence type="inferred from homology"/>
<organism>
    <name type="scientific">Methylocella silvestris (strain DSM 15510 / CIP 108128 / LMG 27833 / NCIMB 13906 / BL2)</name>
    <dbReference type="NCBI Taxonomy" id="395965"/>
    <lineage>
        <taxon>Bacteria</taxon>
        <taxon>Pseudomonadati</taxon>
        <taxon>Pseudomonadota</taxon>
        <taxon>Alphaproteobacteria</taxon>
        <taxon>Hyphomicrobiales</taxon>
        <taxon>Beijerinckiaceae</taxon>
        <taxon>Methylocella</taxon>
    </lineage>
</organism>
<reference key="1">
    <citation type="journal article" date="2010" name="J. Bacteriol.">
        <title>Complete genome sequence of the aerobic facultative methanotroph Methylocella silvestris BL2.</title>
        <authorList>
            <person name="Chen Y."/>
            <person name="Crombie A."/>
            <person name="Rahman M.T."/>
            <person name="Dedysh S.N."/>
            <person name="Liesack W."/>
            <person name="Stott M.B."/>
            <person name="Alam M."/>
            <person name="Theisen A.R."/>
            <person name="Murrell J.C."/>
            <person name="Dunfield P.F."/>
        </authorList>
    </citation>
    <scope>NUCLEOTIDE SEQUENCE [LARGE SCALE GENOMIC DNA]</scope>
    <source>
        <strain>DSM 15510 / CIP 108128 / LMG 27833 / NCIMB 13906 / BL2</strain>
    </source>
</reference>
<keyword id="KW-0963">Cytoplasm</keyword>
<keyword id="KW-0648">Protein biosynthesis</keyword>
<keyword id="KW-1185">Reference proteome</keyword>
<feature type="chain" id="PRO_1000194940" description="Ribosome-recycling factor">
    <location>
        <begin position="1"/>
        <end position="186"/>
    </location>
</feature>
<comment type="function">
    <text evidence="1">Responsible for the release of ribosomes from messenger RNA at the termination of protein biosynthesis. May increase the efficiency of translation by recycling ribosomes from one round of translation to another.</text>
</comment>
<comment type="subcellular location">
    <subcellularLocation>
        <location evidence="1">Cytoplasm</location>
    </subcellularLocation>
</comment>
<comment type="similarity">
    <text evidence="1">Belongs to the RRF family.</text>
</comment>
<gene>
    <name evidence="1" type="primary">frr</name>
    <name type="ordered locus">Msil_3832</name>
</gene>
<evidence type="ECO:0000255" key="1">
    <source>
        <dbReference type="HAMAP-Rule" id="MF_00040"/>
    </source>
</evidence>
<accession>B8EMN5</accession>